<comment type="function">
    <text>Involved in oxygen transport from the lung to the various peripheral tissues.</text>
</comment>
<comment type="subunit">
    <text>Heterotetramer of two alpha-D chains and two beta chains.</text>
</comment>
<comment type="tissue specificity">
    <text>Red blood cells.</text>
</comment>
<comment type="developmental stage">
    <text>In reptiles, the alpha-D chain occurs in a minor hemoglobin component, called hemoglobin d, which is expressed in late embryonic and adult life.</text>
</comment>
<comment type="similarity">
    <text evidence="1">Belongs to the globin family.</text>
</comment>
<proteinExistence type="evidence at transcript level"/>
<protein>
    <recommendedName>
        <fullName>Hemoglobin subunit alpha-D</fullName>
    </recommendedName>
    <alternativeName>
        <fullName>Alpha-D-globin</fullName>
    </alternativeName>
    <alternativeName>
        <fullName>Hemoglobin alpha-D chain</fullName>
    </alternativeName>
</protein>
<feature type="chain" id="PRO_0000052828" description="Hemoglobin subunit alpha-D">
    <location>
        <begin position="1"/>
        <end position="141"/>
    </location>
</feature>
<feature type="domain" description="Globin" evidence="1">
    <location>
        <begin position="1"/>
        <end position="141"/>
    </location>
</feature>
<feature type="binding site" description="distal binding residue">
    <location>
        <position position="58"/>
    </location>
    <ligand>
        <name>heme b</name>
        <dbReference type="ChEBI" id="CHEBI:60344"/>
    </ligand>
    <ligandPart>
        <name>Fe</name>
        <dbReference type="ChEBI" id="CHEBI:18248"/>
    </ligandPart>
</feature>
<feature type="binding site" description="proximal binding residue">
    <location>
        <position position="87"/>
    </location>
    <ligand>
        <name>heme b</name>
        <dbReference type="ChEBI" id="CHEBI:60344"/>
    </ligand>
    <ligandPart>
        <name>Fe</name>
        <dbReference type="ChEBI" id="CHEBI:18248"/>
    </ligandPart>
</feature>
<keyword id="KW-0349">Heme</keyword>
<keyword id="KW-0408">Iron</keyword>
<keyword id="KW-0479">Metal-binding</keyword>
<keyword id="KW-0561">Oxygen transport</keyword>
<keyword id="KW-0813">Transport</keyword>
<dbReference type="EMBL" id="AF304335">
    <property type="protein sequence ID" value="AAG25673.1"/>
    <property type="molecule type" value="mRNA"/>
</dbReference>
<dbReference type="SMR" id="Q9DF25"/>
<dbReference type="GO" id="GO:0072562">
    <property type="term" value="C:blood microparticle"/>
    <property type="evidence" value="ECO:0007669"/>
    <property type="project" value="TreeGrafter"/>
</dbReference>
<dbReference type="GO" id="GO:0031838">
    <property type="term" value="C:haptoglobin-hemoglobin complex"/>
    <property type="evidence" value="ECO:0007669"/>
    <property type="project" value="TreeGrafter"/>
</dbReference>
<dbReference type="GO" id="GO:0005833">
    <property type="term" value="C:hemoglobin complex"/>
    <property type="evidence" value="ECO:0007669"/>
    <property type="project" value="InterPro"/>
</dbReference>
<dbReference type="GO" id="GO:0031720">
    <property type="term" value="F:haptoglobin binding"/>
    <property type="evidence" value="ECO:0007669"/>
    <property type="project" value="TreeGrafter"/>
</dbReference>
<dbReference type="GO" id="GO:0020037">
    <property type="term" value="F:heme binding"/>
    <property type="evidence" value="ECO:0007669"/>
    <property type="project" value="InterPro"/>
</dbReference>
<dbReference type="GO" id="GO:0046872">
    <property type="term" value="F:metal ion binding"/>
    <property type="evidence" value="ECO:0007669"/>
    <property type="project" value="UniProtKB-KW"/>
</dbReference>
<dbReference type="GO" id="GO:0043177">
    <property type="term" value="F:organic acid binding"/>
    <property type="evidence" value="ECO:0007669"/>
    <property type="project" value="TreeGrafter"/>
</dbReference>
<dbReference type="GO" id="GO:0019825">
    <property type="term" value="F:oxygen binding"/>
    <property type="evidence" value="ECO:0007669"/>
    <property type="project" value="InterPro"/>
</dbReference>
<dbReference type="GO" id="GO:0005344">
    <property type="term" value="F:oxygen carrier activity"/>
    <property type="evidence" value="ECO:0007669"/>
    <property type="project" value="UniProtKB-KW"/>
</dbReference>
<dbReference type="GO" id="GO:0004601">
    <property type="term" value="F:peroxidase activity"/>
    <property type="evidence" value="ECO:0007669"/>
    <property type="project" value="TreeGrafter"/>
</dbReference>
<dbReference type="GO" id="GO:0042744">
    <property type="term" value="P:hydrogen peroxide catabolic process"/>
    <property type="evidence" value="ECO:0007669"/>
    <property type="project" value="TreeGrafter"/>
</dbReference>
<dbReference type="CDD" id="cd08927">
    <property type="entry name" value="Hb-alpha-like"/>
    <property type="match status" value="1"/>
</dbReference>
<dbReference type="FunFam" id="1.10.490.10:FF:000002">
    <property type="entry name" value="Hemoglobin subunit alpha"/>
    <property type="match status" value="1"/>
</dbReference>
<dbReference type="Gene3D" id="1.10.490.10">
    <property type="entry name" value="Globins"/>
    <property type="match status" value="1"/>
</dbReference>
<dbReference type="InterPro" id="IPR000971">
    <property type="entry name" value="Globin"/>
</dbReference>
<dbReference type="InterPro" id="IPR009050">
    <property type="entry name" value="Globin-like_sf"/>
</dbReference>
<dbReference type="InterPro" id="IPR012292">
    <property type="entry name" value="Globin/Proto"/>
</dbReference>
<dbReference type="InterPro" id="IPR002338">
    <property type="entry name" value="Hemoglobin_a-typ"/>
</dbReference>
<dbReference type="InterPro" id="IPR050056">
    <property type="entry name" value="Hemoglobin_oxygen_transport"/>
</dbReference>
<dbReference type="PANTHER" id="PTHR11442">
    <property type="entry name" value="HEMOGLOBIN FAMILY MEMBER"/>
    <property type="match status" value="1"/>
</dbReference>
<dbReference type="PANTHER" id="PTHR11442:SF41">
    <property type="entry name" value="HEMOGLOBIN SUBUNIT ZETA"/>
    <property type="match status" value="1"/>
</dbReference>
<dbReference type="Pfam" id="PF00042">
    <property type="entry name" value="Globin"/>
    <property type="match status" value="1"/>
</dbReference>
<dbReference type="PRINTS" id="PR00612">
    <property type="entry name" value="ALPHAHAEM"/>
</dbReference>
<dbReference type="SUPFAM" id="SSF46458">
    <property type="entry name" value="Globin-like"/>
    <property type="match status" value="1"/>
</dbReference>
<dbReference type="PROSITE" id="PS01033">
    <property type="entry name" value="GLOBIN"/>
    <property type="match status" value="1"/>
</dbReference>
<gene>
    <name type="primary">HBAD</name>
</gene>
<organism>
    <name type="scientific">Chelonoidis carbonarius</name>
    <name type="common">Red-footed tortoise</name>
    <name type="synonym">Geochelone carbonaria</name>
    <dbReference type="NCBI Taxonomy" id="50047"/>
    <lineage>
        <taxon>Eukaryota</taxon>
        <taxon>Metazoa</taxon>
        <taxon>Chordata</taxon>
        <taxon>Craniata</taxon>
        <taxon>Vertebrata</taxon>
        <taxon>Euteleostomi</taxon>
        <taxon>Archelosauria</taxon>
        <taxon>Testudinata</taxon>
        <taxon>Testudines</taxon>
        <taxon>Cryptodira</taxon>
        <taxon>Durocryptodira</taxon>
        <taxon>Testudinoidea</taxon>
        <taxon>Testudinidae</taxon>
        <taxon>Chelonoidis</taxon>
    </lineage>
</organism>
<accession>Q9DF25</accession>
<reference key="1">
    <citation type="submission" date="2000-09" db="EMBL/GenBank/DDBJ databases">
        <authorList>
            <person name="Melo M.B."/>
            <person name="Bordin S."/>
            <person name="Duarte A.S.S."/>
            <person name="Campanile R."/>
            <person name="Basseres D.S."/>
            <person name="Ogo S.H."/>
            <person name="Torsoni M.A."/>
            <person name="Saad S.T.O."/>
            <person name="Costa F.F."/>
        </authorList>
    </citation>
    <scope>NUCLEOTIDE SEQUENCE [MRNA]</scope>
    <source>
        <tissue>Blood</tissue>
    </source>
</reference>
<name>HBAD_CHECB</name>
<sequence>MLTEDEKQLIQHVWEKVLGHQEDFGAEALERMFTVYPSTKTYFPHFDLHHDSEQIRHHGKKVVSALGDAVRHMDNLSATLSELSNLHAYNLRVDPVNFKLLSHCFQVVLGAHLGREYTPQVQVAYDKFLAAVSAVLAEKYR</sequence>
<evidence type="ECO:0000255" key="1">
    <source>
        <dbReference type="PROSITE-ProRule" id="PRU00238"/>
    </source>
</evidence>